<sequence>MPKKAGATSKGKNQTKEPETPPPPTGPVATDSKGFVTIAIHAKPGSKQNAVTDLNTEAVGVAIAAPPSEGEANAELCRYLSKVLDLRKSDVVLDKGGKSREKVVKLLASTTPEEVLEKLRTEAEKK</sequence>
<evidence type="ECO:0000250" key="1">
    <source>
        <dbReference type="UniProtKB" id="Q8WUR7"/>
    </source>
</evidence>
<evidence type="ECO:0000256" key="2">
    <source>
        <dbReference type="SAM" id="MobiDB-lite"/>
    </source>
</evidence>
<evidence type="ECO:0000305" key="3"/>
<comment type="similarity">
    <text evidence="3">Belongs to the UPF0235 family.</text>
</comment>
<reference key="1">
    <citation type="journal article" date="2004" name="Genome Res.">
        <title>The status, quality, and expansion of the NIH full-length cDNA project: the Mammalian Gene Collection (MGC).</title>
        <authorList>
            <consortium name="The MGC Project Team"/>
        </authorList>
    </citation>
    <scope>NUCLEOTIDE SEQUENCE [LARGE SCALE MRNA]</scope>
    <source>
        <tissue>Brain</tissue>
    </source>
</reference>
<name>CO040_RAT</name>
<dbReference type="EMBL" id="BC094529">
    <property type="protein sequence ID" value="AAH94529.1"/>
    <property type="molecule type" value="mRNA"/>
</dbReference>
<dbReference type="RefSeq" id="NP_001019920.1">
    <property type="nucleotide sequence ID" value="NM_001024749.2"/>
</dbReference>
<dbReference type="RefSeq" id="XP_003750283.1">
    <property type="nucleotide sequence ID" value="XM_003750235.4"/>
</dbReference>
<dbReference type="RefSeq" id="XP_003754291.1">
    <property type="nucleotide sequence ID" value="XM_003754243.4"/>
</dbReference>
<dbReference type="SMR" id="Q505I4"/>
<dbReference type="FunCoup" id="Q505I4">
    <property type="interactions" value="1547"/>
</dbReference>
<dbReference type="STRING" id="10116.ENSRNOP00000070531"/>
<dbReference type="GlyGen" id="Q505I4">
    <property type="glycosylation" value="1 site"/>
</dbReference>
<dbReference type="iPTMnet" id="Q505I4"/>
<dbReference type="PhosphoSitePlus" id="Q505I4"/>
<dbReference type="PaxDb" id="10116-ENSRNOP00000026405"/>
<dbReference type="GeneID" id="293059"/>
<dbReference type="KEGG" id="rno:293059"/>
<dbReference type="AGR" id="RGD:1305713"/>
<dbReference type="CTD" id="293059"/>
<dbReference type="RGD" id="1305713">
    <property type="gene designation" value="C1h15orf40"/>
</dbReference>
<dbReference type="VEuPathDB" id="HostDB:ENSRNOG00000052273"/>
<dbReference type="eggNOG" id="KOG3276">
    <property type="taxonomic scope" value="Eukaryota"/>
</dbReference>
<dbReference type="HOGENOM" id="CLU_130694_2_0_1"/>
<dbReference type="InParanoid" id="Q505I4"/>
<dbReference type="OrthoDB" id="244097at2759"/>
<dbReference type="PhylomeDB" id="Q505I4"/>
<dbReference type="TreeFam" id="TF313882"/>
<dbReference type="PRO" id="PR:Q505I4"/>
<dbReference type="Proteomes" id="UP000002494">
    <property type="component" value="Chromosome 1"/>
</dbReference>
<dbReference type="Bgee" id="ENSRNOG00000052273">
    <property type="expression patterns" value="Expressed in quadriceps femoris and 19 other cell types or tissues"/>
</dbReference>
<dbReference type="GO" id="GO:0005737">
    <property type="term" value="C:cytoplasm"/>
    <property type="evidence" value="ECO:0000318"/>
    <property type="project" value="GO_Central"/>
</dbReference>
<dbReference type="Gene3D" id="3.30.1200.10">
    <property type="entry name" value="YggU-like"/>
    <property type="match status" value="1"/>
</dbReference>
<dbReference type="HAMAP" id="MF_00634">
    <property type="entry name" value="UPF0235"/>
    <property type="match status" value="1"/>
</dbReference>
<dbReference type="InterPro" id="IPR003746">
    <property type="entry name" value="DUF167"/>
</dbReference>
<dbReference type="InterPro" id="IPR036591">
    <property type="entry name" value="YggU-like_sf"/>
</dbReference>
<dbReference type="NCBIfam" id="TIGR00251">
    <property type="entry name" value="DUF167 family protein"/>
    <property type="match status" value="1"/>
</dbReference>
<dbReference type="PANTHER" id="PTHR13420">
    <property type="entry name" value="UPF0235 PROTEIN C15ORF40"/>
    <property type="match status" value="1"/>
</dbReference>
<dbReference type="PANTHER" id="PTHR13420:SF7">
    <property type="entry name" value="UPF0235 PROTEIN C15ORF40"/>
    <property type="match status" value="1"/>
</dbReference>
<dbReference type="Pfam" id="PF02594">
    <property type="entry name" value="DUF167"/>
    <property type="match status" value="1"/>
</dbReference>
<dbReference type="SMART" id="SM01152">
    <property type="entry name" value="DUF167"/>
    <property type="match status" value="1"/>
</dbReference>
<dbReference type="SUPFAM" id="SSF69786">
    <property type="entry name" value="YggU-like"/>
    <property type="match status" value="1"/>
</dbReference>
<proteinExistence type="evidence at transcript level"/>
<organism>
    <name type="scientific">Rattus norvegicus</name>
    <name type="common">Rat</name>
    <dbReference type="NCBI Taxonomy" id="10116"/>
    <lineage>
        <taxon>Eukaryota</taxon>
        <taxon>Metazoa</taxon>
        <taxon>Chordata</taxon>
        <taxon>Craniata</taxon>
        <taxon>Vertebrata</taxon>
        <taxon>Euteleostomi</taxon>
        <taxon>Mammalia</taxon>
        <taxon>Eutheria</taxon>
        <taxon>Euarchontoglires</taxon>
        <taxon>Glires</taxon>
        <taxon>Rodentia</taxon>
        <taxon>Myomorpha</taxon>
        <taxon>Muroidea</taxon>
        <taxon>Muridae</taxon>
        <taxon>Murinae</taxon>
        <taxon>Rattus</taxon>
    </lineage>
</organism>
<keyword id="KW-0597">Phosphoprotein</keyword>
<keyword id="KW-1185">Reference proteome</keyword>
<feature type="chain" id="PRO_0000278091" description="UPF0235 protein C15orf40 homolog">
    <location>
        <begin position="1"/>
        <end position="126"/>
    </location>
</feature>
<feature type="region of interest" description="Disordered" evidence="2">
    <location>
        <begin position="1"/>
        <end position="33"/>
    </location>
</feature>
<feature type="modified residue" description="Phosphoserine" evidence="1">
    <location>
        <position position="89"/>
    </location>
</feature>
<protein>
    <recommendedName>
        <fullName>UPF0235 protein C15orf40 homolog</fullName>
    </recommendedName>
</protein>
<accession>Q505I4</accession>